<accession>Q14353</accession>
<accession>A8K0A0</accession>
<accession>Q53Y34</accession>
<accession>Q8WVJ1</accession>
<organism>
    <name type="scientific">Homo sapiens</name>
    <name type="common">Human</name>
    <dbReference type="NCBI Taxonomy" id="9606"/>
    <lineage>
        <taxon>Eukaryota</taxon>
        <taxon>Metazoa</taxon>
        <taxon>Chordata</taxon>
        <taxon>Craniata</taxon>
        <taxon>Vertebrata</taxon>
        <taxon>Euteleostomi</taxon>
        <taxon>Mammalia</taxon>
        <taxon>Eutheria</taxon>
        <taxon>Euarchontoglires</taxon>
        <taxon>Primates</taxon>
        <taxon>Haplorrhini</taxon>
        <taxon>Catarrhini</taxon>
        <taxon>Hominidae</taxon>
        <taxon>Homo</taxon>
    </lineage>
</organism>
<dbReference type="EC" id="2.1.1.2"/>
<dbReference type="EMBL" id="Z49878">
    <property type="protein sequence ID" value="CAA90035.1"/>
    <property type="molecule type" value="mRNA"/>
</dbReference>
<dbReference type="EMBL" id="AF010248">
    <property type="protein sequence ID" value="AAD04781.1"/>
    <property type="molecule type" value="Genomic_DNA"/>
</dbReference>
<dbReference type="EMBL" id="AF010246">
    <property type="protein sequence ID" value="AAD04781.1"/>
    <property type="status" value="JOINED"/>
    <property type="molecule type" value="Genomic_DNA"/>
</dbReference>
<dbReference type="EMBL" id="AF010247">
    <property type="protein sequence ID" value="AAD04781.1"/>
    <property type="status" value="JOINED"/>
    <property type="molecule type" value="Genomic_DNA"/>
</dbReference>
<dbReference type="EMBL" id="AF188893">
    <property type="protein sequence ID" value="AAF01461.1"/>
    <property type="molecule type" value="Genomic_DNA"/>
</dbReference>
<dbReference type="EMBL" id="BT007034">
    <property type="protein sequence ID" value="AAP35682.1"/>
    <property type="molecule type" value="mRNA"/>
</dbReference>
<dbReference type="EMBL" id="AK289465">
    <property type="protein sequence ID" value="BAF82154.1"/>
    <property type="molecule type" value="mRNA"/>
</dbReference>
<dbReference type="EMBL" id="AC005329">
    <property type="protein sequence ID" value="AAC27668.1"/>
    <property type="molecule type" value="Genomic_DNA"/>
</dbReference>
<dbReference type="EMBL" id="CH471139">
    <property type="protein sequence ID" value="EAW69505.1"/>
    <property type="molecule type" value="Genomic_DNA"/>
</dbReference>
<dbReference type="EMBL" id="BC016760">
    <property type="protein sequence ID" value="AAH16760.1"/>
    <property type="molecule type" value="mRNA"/>
</dbReference>
<dbReference type="EMBL" id="BC017936">
    <property type="protein sequence ID" value="AAH17936.1"/>
    <property type="molecule type" value="mRNA"/>
</dbReference>
<dbReference type="CCDS" id="CCDS12064.1">
    <molecule id="Q14353-1"/>
</dbReference>
<dbReference type="CCDS" id="CCDS45897.1">
    <molecule id="Q14353-2"/>
</dbReference>
<dbReference type="PIR" id="S62732">
    <property type="entry name" value="S62732"/>
</dbReference>
<dbReference type="RefSeq" id="NP_000147.1">
    <molecule id="Q14353-1"/>
    <property type="nucleotide sequence ID" value="NM_000156.6"/>
</dbReference>
<dbReference type="RefSeq" id="NP_620279.1">
    <molecule id="Q14353-2"/>
    <property type="nucleotide sequence ID" value="NM_138924.3"/>
</dbReference>
<dbReference type="PDB" id="3ORH">
    <property type="method" value="X-ray"/>
    <property type="resolution" value="1.86 A"/>
    <property type="chains" value="A/B/C/D=1-236"/>
</dbReference>
<dbReference type="PDBsum" id="3ORH"/>
<dbReference type="SMR" id="Q14353"/>
<dbReference type="BioGRID" id="108865">
    <property type="interactions" value="37"/>
</dbReference>
<dbReference type="FunCoup" id="Q14353">
    <property type="interactions" value="1587"/>
</dbReference>
<dbReference type="IntAct" id="Q14353">
    <property type="interactions" value="24"/>
</dbReference>
<dbReference type="STRING" id="9606.ENSP00000403536"/>
<dbReference type="ChEMBL" id="CHEMBL4523290"/>
<dbReference type="DrugBank" id="DB00148">
    <property type="generic name" value="Creatine"/>
</dbReference>
<dbReference type="DrugBank" id="DB02751">
    <property type="generic name" value="Glycocyamine"/>
</dbReference>
<dbReference type="DrugBank" id="DB00536">
    <property type="generic name" value="Guanidine"/>
</dbReference>
<dbReference type="DrugBank" id="DB13191">
    <property type="generic name" value="Phosphocreatine"/>
</dbReference>
<dbReference type="DrugBank" id="DB01752">
    <property type="generic name" value="S-adenosyl-L-homocysteine"/>
</dbReference>
<dbReference type="GlyGen" id="Q14353">
    <property type="glycosylation" value="1 site, 1 O-linked glycan (1 site)"/>
</dbReference>
<dbReference type="iPTMnet" id="Q14353"/>
<dbReference type="PhosphoSitePlus" id="Q14353"/>
<dbReference type="BioMuta" id="GAMT"/>
<dbReference type="DMDM" id="2498404"/>
<dbReference type="OGP" id="Q14353"/>
<dbReference type="jPOST" id="Q14353"/>
<dbReference type="MassIVE" id="Q14353"/>
<dbReference type="PaxDb" id="9606-ENSP00000403536"/>
<dbReference type="PeptideAtlas" id="Q14353"/>
<dbReference type="ProteomicsDB" id="59970">
    <molecule id="Q14353-1"/>
</dbReference>
<dbReference type="ProteomicsDB" id="59971">
    <molecule id="Q14353-2"/>
</dbReference>
<dbReference type="Pumba" id="Q14353"/>
<dbReference type="Antibodypedia" id="22677">
    <property type="antibodies" value="236 antibodies from 29 providers"/>
</dbReference>
<dbReference type="DNASU" id="2593"/>
<dbReference type="Ensembl" id="ENST00000252288.8">
    <molecule id="Q14353-1"/>
    <property type="protein sequence ID" value="ENSP00000252288.1"/>
    <property type="gene ID" value="ENSG00000130005.13"/>
</dbReference>
<dbReference type="Ensembl" id="ENST00000447102.8">
    <molecule id="Q14353-2"/>
    <property type="protein sequence ID" value="ENSP00000403536.2"/>
    <property type="gene ID" value="ENSG00000130005.13"/>
</dbReference>
<dbReference type="GeneID" id="2593"/>
<dbReference type="KEGG" id="hsa:2593"/>
<dbReference type="MANE-Select" id="ENST00000252288.8">
    <property type="protein sequence ID" value="ENSP00000252288.1"/>
    <property type="RefSeq nucleotide sequence ID" value="NM_000156.6"/>
    <property type="RefSeq protein sequence ID" value="NP_000147.1"/>
</dbReference>
<dbReference type="UCSC" id="uc002lsk.5">
    <molecule id="Q14353-1"/>
    <property type="organism name" value="human"/>
</dbReference>
<dbReference type="AGR" id="HGNC:4136"/>
<dbReference type="CTD" id="2593"/>
<dbReference type="DisGeNET" id="2593"/>
<dbReference type="GeneCards" id="GAMT"/>
<dbReference type="GeneReviews" id="GAMT"/>
<dbReference type="HGNC" id="HGNC:4136">
    <property type="gene designation" value="GAMT"/>
</dbReference>
<dbReference type="HPA" id="ENSG00000130005">
    <property type="expression patterns" value="Tissue enhanced (liver, skeletal muscle, tongue)"/>
</dbReference>
<dbReference type="MalaCards" id="GAMT"/>
<dbReference type="MIM" id="601240">
    <property type="type" value="gene"/>
</dbReference>
<dbReference type="MIM" id="612736">
    <property type="type" value="phenotype"/>
</dbReference>
<dbReference type="neXtProt" id="NX_Q14353"/>
<dbReference type="OpenTargets" id="ENSG00000130005"/>
<dbReference type="Orphanet" id="382">
    <property type="disease" value="Guanidinoacetate methyltransferase deficiency"/>
</dbReference>
<dbReference type="PharmGKB" id="PA28549"/>
<dbReference type="VEuPathDB" id="HostDB:ENSG00000130005"/>
<dbReference type="eggNOG" id="KOG1709">
    <property type="taxonomic scope" value="Eukaryota"/>
</dbReference>
<dbReference type="GeneTree" id="ENSGT00390000018061"/>
<dbReference type="HOGENOM" id="CLU_102800_0_0_1"/>
<dbReference type="InParanoid" id="Q14353"/>
<dbReference type="OMA" id="HKMITPT"/>
<dbReference type="OrthoDB" id="19014at2759"/>
<dbReference type="PAN-GO" id="Q14353">
    <property type="GO annotations" value="4 GO annotations based on evolutionary models"/>
</dbReference>
<dbReference type="PhylomeDB" id="Q14353"/>
<dbReference type="TreeFam" id="TF328555"/>
<dbReference type="BioCyc" id="MetaCyc:HS05327-MONOMER"/>
<dbReference type="BRENDA" id="2.1.1.2">
    <property type="organism ID" value="2681"/>
</dbReference>
<dbReference type="PathwayCommons" id="Q14353"/>
<dbReference type="Reactome" id="R-HSA-71288">
    <property type="pathway name" value="Creatine metabolism"/>
</dbReference>
<dbReference type="Reactome" id="R-HSA-8986944">
    <property type="pathway name" value="Transcriptional Regulation by MECP2"/>
</dbReference>
<dbReference type="SignaLink" id="Q14353"/>
<dbReference type="SIGNOR" id="Q14353"/>
<dbReference type="UniPathway" id="UPA00104">
    <property type="reaction ID" value="UER00580"/>
</dbReference>
<dbReference type="BioGRID-ORCS" id="2593">
    <property type="hits" value="14 hits in 1169 CRISPR screens"/>
</dbReference>
<dbReference type="ChiTaRS" id="GAMT">
    <property type="organism name" value="human"/>
</dbReference>
<dbReference type="EvolutionaryTrace" id="Q14353"/>
<dbReference type="GeneWiki" id="Guanidinoacetate_N-methyltransferase"/>
<dbReference type="GenomeRNAi" id="2593"/>
<dbReference type="Pharos" id="Q14353">
    <property type="development level" value="Tbio"/>
</dbReference>
<dbReference type="PRO" id="PR:Q14353"/>
<dbReference type="Proteomes" id="UP000005640">
    <property type="component" value="Chromosome 19"/>
</dbReference>
<dbReference type="RNAct" id="Q14353">
    <property type="molecule type" value="protein"/>
</dbReference>
<dbReference type="Bgee" id="ENSG00000130005">
    <property type="expression patterns" value="Expressed in hindlimb stylopod muscle and 177 other cell types or tissues"/>
</dbReference>
<dbReference type="ExpressionAtlas" id="Q14353">
    <property type="expression patterns" value="baseline and differential"/>
</dbReference>
<dbReference type="GO" id="GO:0005737">
    <property type="term" value="C:cytoplasm"/>
    <property type="evidence" value="ECO:0000318"/>
    <property type="project" value="GO_Central"/>
</dbReference>
<dbReference type="GO" id="GO:0005829">
    <property type="term" value="C:cytosol"/>
    <property type="evidence" value="ECO:0000304"/>
    <property type="project" value="Reactome"/>
</dbReference>
<dbReference type="GO" id="GO:0005634">
    <property type="term" value="C:nucleus"/>
    <property type="evidence" value="ECO:0000318"/>
    <property type="project" value="GO_Central"/>
</dbReference>
<dbReference type="GO" id="GO:0030731">
    <property type="term" value="F:guanidinoacetate N-methyltransferase activity"/>
    <property type="evidence" value="ECO:0000315"/>
    <property type="project" value="UniProtKB"/>
</dbReference>
<dbReference type="GO" id="GO:0008168">
    <property type="term" value="F:methyltransferase activity"/>
    <property type="evidence" value="ECO:0000304"/>
    <property type="project" value="Reactome"/>
</dbReference>
<dbReference type="GO" id="GO:0009887">
    <property type="term" value="P:animal organ morphogenesis"/>
    <property type="evidence" value="ECO:0007669"/>
    <property type="project" value="Ensembl"/>
</dbReference>
<dbReference type="GO" id="GO:0006601">
    <property type="term" value="P:creatine biosynthetic process"/>
    <property type="evidence" value="ECO:0000314"/>
    <property type="project" value="UniProtKB"/>
</dbReference>
<dbReference type="GO" id="GO:0006600">
    <property type="term" value="P:creatine metabolic process"/>
    <property type="evidence" value="ECO:0000304"/>
    <property type="project" value="Reactome"/>
</dbReference>
<dbReference type="GO" id="GO:0032259">
    <property type="term" value="P:methylation"/>
    <property type="evidence" value="ECO:0007669"/>
    <property type="project" value="UniProtKB-KW"/>
</dbReference>
<dbReference type="GO" id="GO:0006936">
    <property type="term" value="P:muscle contraction"/>
    <property type="evidence" value="ECO:0000304"/>
    <property type="project" value="ProtInc"/>
</dbReference>
<dbReference type="GO" id="GO:0040014">
    <property type="term" value="P:regulation of multicellular organism growth"/>
    <property type="evidence" value="ECO:0007669"/>
    <property type="project" value="Ensembl"/>
</dbReference>
<dbReference type="GO" id="GO:0007283">
    <property type="term" value="P:spermatogenesis"/>
    <property type="evidence" value="ECO:0007669"/>
    <property type="project" value="Ensembl"/>
</dbReference>
<dbReference type="CDD" id="cd02440">
    <property type="entry name" value="AdoMet_MTases"/>
    <property type="match status" value="1"/>
</dbReference>
<dbReference type="FunFam" id="3.40.50.150:FF:000096">
    <property type="entry name" value="Guanidinoacetate N-methyltransferase"/>
    <property type="match status" value="1"/>
</dbReference>
<dbReference type="Gene3D" id="3.40.50.150">
    <property type="entry name" value="Vaccinia Virus protein VP39"/>
    <property type="match status" value="1"/>
</dbReference>
<dbReference type="InterPro" id="IPR016550">
    <property type="entry name" value="GuanidinoAc_N-MeTrfase"/>
</dbReference>
<dbReference type="InterPro" id="IPR051038">
    <property type="entry name" value="RMT2/GAMT_Mtase"/>
</dbReference>
<dbReference type="InterPro" id="IPR026480">
    <property type="entry name" value="RMT2_dom"/>
</dbReference>
<dbReference type="InterPro" id="IPR029063">
    <property type="entry name" value="SAM-dependent_MTases_sf"/>
</dbReference>
<dbReference type="PANTHER" id="PTHR32379">
    <property type="entry name" value="GUANIDINOACETATE N-METHYLTRANSFERASE"/>
    <property type="match status" value="1"/>
</dbReference>
<dbReference type="PANTHER" id="PTHR32379:SF1">
    <property type="entry name" value="GUANIDINOACETATE N-METHYLTRANSFERASE"/>
    <property type="match status" value="1"/>
</dbReference>
<dbReference type="PIRSF" id="PIRSF009285">
    <property type="entry name" value="GAMT"/>
    <property type="match status" value="1"/>
</dbReference>
<dbReference type="SUPFAM" id="SSF53335">
    <property type="entry name" value="S-adenosyl-L-methionine-dependent methyltransferases"/>
    <property type="match status" value="1"/>
</dbReference>
<dbReference type="PROSITE" id="PS51559">
    <property type="entry name" value="SAM_RMT2"/>
    <property type="match status" value="1"/>
</dbReference>
<keyword id="KW-0002">3D-structure</keyword>
<keyword id="KW-0007">Acetylation</keyword>
<keyword id="KW-0025">Alternative splicing</keyword>
<keyword id="KW-0225">Disease variant</keyword>
<keyword id="KW-0489">Methyltransferase</keyword>
<keyword id="KW-1267">Proteomics identification</keyword>
<keyword id="KW-1185">Reference proteome</keyword>
<keyword id="KW-0949">S-adenosyl-L-methionine</keyword>
<keyword id="KW-0808">Transferase</keyword>
<gene>
    <name type="primary">GAMT</name>
</gene>
<comment type="function">
    <text evidence="14 15 16">Converts guanidinoacetate to creatine, using S-adenosylmethionine as the methyl donor (PubMed:24415674, PubMed:26003046, PubMed:26319512). Important in nervous system development (PubMed:24415674).</text>
</comment>
<comment type="catalytic activity">
    <reaction evidence="3">
        <text>guanidinoacetate + S-adenosyl-L-methionine = creatine + S-adenosyl-L-homocysteine + H(+)</text>
        <dbReference type="Rhea" id="RHEA:10656"/>
        <dbReference type="ChEBI" id="CHEBI:15378"/>
        <dbReference type="ChEBI" id="CHEBI:57742"/>
        <dbReference type="ChEBI" id="CHEBI:57856"/>
        <dbReference type="ChEBI" id="CHEBI:57947"/>
        <dbReference type="ChEBI" id="CHEBI:59789"/>
        <dbReference type="EC" id="2.1.1.2"/>
    </reaction>
</comment>
<comment type="pathway">
    <text>Amine and polyamine biosynthesis; creatine biosynthesis; creatine from L-arginine and glycine: step 2/2.</text>
</comment>
<comment type="subunit">
    <text evidence="1">Monomer.</text>
</comment>
<comment type="interaction">
    <interactant intactId="EBI-3909086">
        <id>Q14353</id>
    </interactant>
    <interactant intactId="EBI-2513774">
        <id>O95363</id>
        <label>FARS2</label>
    </interactant>
    <organismsDiffer>false</organismsDiffer>
    <experiments>2</experiments>
</comment>
<comment type="interaction">
    <interactant intactId="EBI-3909086">
        <id>Q14353</id>
    </interactant>
    <interactant intactId="EBI-3060998">
        <id>Q969Q5</id>
        <label>RAB24</label>
    </interactant>
    <organismsDiffer>false</organismsDiffer>
    <experiments>3</experiments>
</comment>
<comment type="interaction">
    <interactant intactId="EBI-3909086">
        <id>Q14353</id>
    </interactant>
    <interactant intactId="EBI-11523450">
        <id>Q9HCM9-2</id>
        <label>TRIM39</label>
    </interactant>
    <organismsDiffer>false</organismsDiffer>
    <experiments>5</experiments>
</comment>
<comment type="alternative products">
    <event type="alternative splicing"/>
    <isoform>
        <id>Q14353-1</id>
        <name>1</name>
        <sequence type="displayed"/>
    </isoform>
    <isoform>
        <id>Q14353-2</id>
        <name>2</name>
        <sequence type="described" ref="VSP_042722"/>
    </isoform>
</comment>
<comment type="tissue specificity">
    <text evidence="17">Expressed in liver.</text>
</comment>
<comment type="disease" evidence="4 5 7 8 9 10 11 12 13 14 15 17">
    <disease id="DI-01690">
        <name>Cerebral creatine deficiency syndrome 2</name>
        <acronym>CCDS2</acronym>
        <description>An autosomal recessive disorder characterized by developmental delay and regression, intellectual disability, severe disturbance of expressive and cognitive speech, intractable seizures, movement disturbances, severe depletion of creatine and phosphocreatine in the brain, and accumulation of guanidinoacetic acid in brain and body fluids.</description>
        <dbReference type="MIM" id="612736"/>
    </disease>
    <text>The disease is caused by variants affecting the gene represented in this entry.</text>
</comment>
<comment type="similarity">
    <text evidence="3">Belongs to the class I-like SAM-binding methyltransferase superfamily. RMT2 methyltransferase family.</text>
</comment>
<proteinExistence type="evidence at protein level"/>
<protein>
    <recommendedName>
        <fullName>Guanidinoacetate N-methyltransferase</fullName>
        <ecNumber>2.1.1.2</ecNumber>
    </recommendedName>
</protein>
<evidence type="ECO:0000250" key="1"/>
<evidence type="ECO:0000250" key="2">
    <source>
        <dbReference type="UniProtKB" id="P10868"/>
    </source>
</evidence>
<evidence type="ECO:0000255" key="3">
    <source>
        <dbReference type="PROSITE-ProRule" id="PRU00892"/>
    </source>
</evidence>
<evidence type="ECO:0000269" key="4">
    <source>
    </source>
</evidence>
<evidence type="ECO:0000269" key="5">
    <source>
    </source>
</evidence>
<evidence type="ECO:0000269" key="6">
    <source>
    </source>
</evidence>
<evidence type="ECO:0000269" key="7">
    <source>
    </source>
</evidence>
<evidence type="ECO:0000269" key="8">
    <source>
    </source>
</evidence>
<evidence type="ECO:0000269" key="9">
    <source>
    </source>
</evidence>
<evidence type="ECO:0000269" key="10">
    <source>
    </source>
</evidence>
<evidence type="ECO:0000269" key="11">
    <source>
    </source>
</evidence>
<evidence type="ECO:0000269" key="12">
    <source>
    </source>
</evidence>
<evidence type="ECO:0000269" key="13">
    <source>
    </source>
</evidence>
<evidence type="ECO:0000269" key="14">
    <source>
    </source>
</evidence>
<evidence type="ECO:0000269" key="15">
    <source>
    </source>
</evidence>
<evidence type="ECO:0000269" key="16">
    <source>
    </source>
</evidence>
<evidence type="ECO:0000269" key="17">
    <source>
    </source>
</evidence>
<evidence type="ECO:0000303" key="18">
    <source>
    </source>
</evidence>
<evidence type="ECO:0007744" key="19">
    <source>
    </source>
</evidence>
<evidence type="ECO:0007829" key="20">
    <source>
        <dbReference type="PDB" id="3ORH"/>
    </source>
</evidence>
<sequence>MSAPSATPIFAPGENCSPAWGAAPAAYDAADTHLRILGKPVMERWETPYMHALAAAASSKGGRVLEVGFGMAIAASKVQEAPIDEHWIIECNDGVFQRLRDWAPRQTHKVIPLKGLWEDVAPTLPDGHFDGILYDTYPLSEETWHTHQFNFIKNHAFRLLKPGGVLTYCNLTSWGELMKSKYSDITIMFEETQVPALLEAGFRRENIRTEVMALVPPADCRYYAFPQMITPLVTKG</sequence>
<name>GAMT_HUMAN</name>
<feature type="initiator methionine" description="Removed" evidence="19">
    <location>
        <position position="1"/>
    </location>
</feature>
<feature type="chain" id="PRO_0000087430" description="Guanidinoacetate N-methyltransferase">
    <location>
        <begin position="2"/>
        <end position="236"/>
    </location>
</feature>
<feature type="domain" description="RMT2" evidence="3">
    <location>
        <begin position="13"/>
        <end position="236"/>
    </location>
</feature>
<feature type="binding site">
    <location>
        <position position="20"/>
    </location>
    <ligand>
        <name>S-adenosyl-L-methionine</name>
        <dbReference type="ChEBI" id="CHEBI:59789"/>
    </ligand>
</feature>
<feature type="binding site" evidence="2 3">
    <location>
        <position position="42"/>
    </location>
    <ligand>
        <name>guanidinoacetate</name>
        <dbReference type="ChEBI" id="CHEBI:57742"/>
    </ligand>
</feature>
<feature type="binding site" evidence="2 3">
    <location>
        <position position="46"/>
    </location>
    <ligand>
        <name>guanidinoacetate</name>
        <dbReference type="ChEBI" id="CHEBI:57742"/>
    </ligand>
</feature>
<feature type="binding site">
    <location>
        <position position="50"/>
    </location>
    <ligand>
        <name>S-adenosyl-L-methionine</name>
        <dbReference type="ChEBI" id="CHEBI:59789"/>
    </ligand>
</feature>
<feature type="binding site">
    <location>
        <begin position="69"/>
        <end position="74"/>
    </location>
    <ligand>
        <name>S-adenosyl-L-methionine</name>
        <dbReference type="ChEBI" id="CHEBI:59789"/>
    </ligand>
</feature>
<feature type="binding site">
    <location>
        <begin position="90"/>
        <end position="92"/>
    </location>
    <ligand>
        <name>S-adenosyl-L-methionine</name>
        <dbReference type="ChEBI" id="CHEBI:59789"/>
    </ligand>
</feature>
<feature type="binding site">
    <location>
        <begin position="117"/>
        <end position="118"/>
    </location>
    <ligand>
        <name>S-adenosyl-L-methionine</name>
        <dbReference type="ChEBI" id="CHEBI:59789"/>
    </ligand>
</feature>
<feature type="binding site" evidence="2">
    <location>
        <position position="135"/>
    </location>
    <ligand>
        <name>guanidinoacetate</name>
        <dbReference type="ChEBI" id="CHEBI:57742"/>
    </ligand>
</feature>
<feature type="binding site">
    <location>
        <position position="135"/>
    </location>
    <ligand>
        <name>S-adenosyl-L-methionine</name>
        <dbReference type="ChEBI" id="CHEBI:59789"/>
    </ligand>
</feature>
<feature type="binding site" evidence="2">
    <location>
        <begin position="171"/>
        <end position="172"/>
    </location>
    <ligand>
        <name>guanidinoacetate</name>
        <dbReference type="ChEBI" id="CHEBI:57742"/>
    </ligand>
</feature>
<feature type="modified residue" description="N-acetylserine" evidence="19">
    <location>
        <position position="2"/>
    </location>
</feature>
<feature type="splice variant" id="VSP_042722" description="In isoform 2." evidence="18">
    <original>ETQVPALLEAGFRRENIRTEVMALVPPADCRYYAFPQMITPLVTKG</original>
    <variation>VRPPEVPHGSPGSDLGWGWEGAAGATLLPGEGPFLTPWVGWTVLVHLEIKVLCLAQWLPGAVAQVYNPSTVEGRGGQIA</variation>
    <location>
        <begin position="191"/>
        <end position="236"/>
    </location>
</feature>
<feature type="sequence variant" id="VAR_071775" description="In CCDS2; uncertain significance; no effect on activity; dbSNP:rs776498025." evidence="14">
    <original>P</original>
    <variation>T</variation>
    <location>
        <position position="8"/>
    </location>
</feature>
<feature type="sequence variant" id="VAR_058102" description="In CCDS2; dbSNP:rs80338734." evidence="5 7">
    <original>W</original>
    <variation>S</variation>
    <location>
        <position position="20"/>
    </location>
</feature>
<feature type="sequence variant" id="VAR_071776" description="No effect on activity; dbSNP:rs200833152." evidence="14">
    <original>Y</original>
    <variation>H</variation>
    <location>
        <position position="27"/>
    </location>
</feature>
<feature type="sequence variant" id="VAR_075290" description="No effect on enzymatic activity; dbSNP:rs200339910." evidence="16">
    <original>R</original>
    <variation>L</variation>
    <location>
        <position position="44"/>
    </location>
</feature>
<feature type="sequence variant" id="VAR_071777" description="In CCDS2; loss of activity; dbSNP:rs886054247 and dbSNP:rs967404590." evidence="13 14">
    <original>W</original>
    <variation>R</variation>
    <location>
        <position position="45"/>
    </location>
</feature>
<feature type="sequence variant" id="VAR_058103" description="In CCDS2; retains no significant activity; dbSNP:rs104894694." evidence="10 14">
    <original>M</original>
    <variation>L</variation>
    <location>
        <position position="50"/>
    </location>
</feature>
<feature type="sequence variant" id="VAR_058104" description="In CCDS2; retains no significant activity." evidence="5 9 14">
    <original>H</original>
    <variation>P</variation>
    <location>
        <position position="51"/>
    </location>
</feature>
<feature type="sequence variant" id="VAR_058105" description="In CCDS2; loss of activity; dbSNP:rs1220169908." evidence="5 14">
    <original>A</original>
    <variation>P</variation>
    <location>
        <position position="54"/>
    </location>
</feature>
<feature type="sequence variant" id="VAR_071778" description="In CCDS2; retains no significant activity; dbSNP:rs1447665588." evidence="14">
    <original>G</original>
    <variation>C</variation>
    <location>
        <position position="68"/>
    </location>
</feature>
<feature type="sequence variant" id="VAR_075291" description="No effect on enzymatic activity; dbSNP:rs372027428." evidence="15">
    <original>M</original>
    <variation>V</variation>
    <location>
        <position position="71"/>
    </location>
</feature>
<feature type="sequence variant" id="VAR_071779" description="In CCDS2; retains no significant activity; dbSNP:rs1441030187." evidence="14">
    <original>A</original>
    <variation>V</variation>
    <location>
        <position position="75"/>
    </location>
</feature>
<feature type="sequence variant" id="VAR_075292" description="No effect on enzymatic activity; dbSNP:rs150338273." evidence="16">
    <original>S</original>
    <variation>L</variation>
    <location>
        <position position="76"/>
    </location>
</feature>
<feature type="sequence variant" id="VAR_071780" description="In CCDS2." evidence="13">
    <original>V</original>
    <variation>E</variation>
    <location>
        <position position="78"/>
    </location>
</feature>
<feature type="sequence variant" id="VAR_075293" description="No effect on enzymatic activity; dbSNP:rs141358977." evidence="15">
    <original>V</original>
    <variation>M</variation>
    <location>
        <position position="78"/>
    </location>
</feature>
<feature type="sequence variant" id="VAR_075294" description="No effect on enzymatic activity; dbSNP:rs140778208." evidence="15">
    <original>V</original>
    <variation>I</variation>
    <location>
        <position position="95"/>
    </location>
</feature>
<feature type="sequence variant" id="VAR_075295" description="No effect on enzymatic activity; dbSNP:rs148838075." evidence="15">
    <original>R</original>
    <variation>Q</variation>
    <location>
        <position position="105"/>
    </location>
</feature>
<feature type="sequence variant" id="VAR_075296" description="In CCDS2; uncertain significance; severely reduced enzymatic activity; dbSNP:rs145817990." evidence="15">
    <original>Q</original>
    <variation>P</variation>
    <location>
        <position position="106"/>
    </location>
</feature>
<feature type="sequence variant" id="VAR_071781" description="In CCDS2; retains no significant activity; dbSNP:rs753198836." evidence="14">
    <original>V</original>
    <variation>F</variation>
    <location>
        <position position="110"/>
    </location>
</feature>
<feature type="sequence variant" id="VAR_071782" description="In CCDS2; dbSNP:rs774144200." evidence="12">
    <original>D</original>
    <variation>N</variation>
    <location>
        <position position="135"/>
    </location>
</feature>
<feature type="sequence variant" id="VAR_075297" description="No effect on enzymatic activity; dbSNP:rs149821870." evidence="15">
    <original>T</original>
    <variation>R</variation>
    <location>
        <position position="146"/>
    </location>
</feature>
<feature type="sequence variant" id="VAR_071783" description="In CCDS2; retains no significant activity; dbSNP:rs1371496558." evidence="14">
    <original>H</original>
    <variation>Y</variation>
    <location>
        <position position="147"/>
    </location>
</feature>
<feature type="sequence variant" id="VAR_075298" description="Disrupts enzymatic activity; dbSNP:rs368221789." evidence="15">
    <original>A</original>
    <variation>D</variation>
    <location>
        <position position="156"/>
    </location>
</feature>
<feature type="sequence variant" id="VAR_075299" description="No effect on enzymatic activity; dbSNP:rs372260609." evidence="15">
    <original>F</original>
    <variation>L</variation>
    <location>
        <position position="157"/>
    </location>
</feature>
<feature type="sequence variant" id="VAR_071784" description="In CCDS2; loss of activity; dbSNP:rs2144636453." evidence="14">
    <original>L</original>
    <variation>P</variation>
    <location>
        <position position="159"/>
    </location>
</feature>
<feature type="sequence variant" id="VAR_071785" description="In CCDS2; uncertain significance; dbSNP:rs760101382." evidence="13">
    <original>G</original>
    <variation>D</variation>
    <location>
        <position position="164"/>
    </location>
</feature>
<feature type="sequence variant" id="VAR_071786" description="In CCDS2; loss of activity; dbSNP:rs1483148182." evidence="11 14">
    <original>L</original>
    <variation>P</variation>
    <location>
        <position position="166"/>
    </location>
</feature>
<feature type="sequence variant" id="VAR_075300" description="Disrupts enzymatic activity; dbSNP:rs374762419." evidence="15">
    <original>T</original>
    <variation>I</variation>
    <location>
        <position position="167"/>
    </location>
</feature>
<feature type="sequence variant" id="VAR_071787" description="In CCDS2; dbSNP:rs1600158346." evidence="13">
    <original>C</original>
    <variation>R</variation>
    <location>
        <position position="169"/>
    </location>
</feature>
<feature type="sequence variant" id="VAR_058106" description="In CCDS2; retains no significant activity; dbSNP:rs121909272." evidence="7 14">
    <original>C</original>
    <variation>Y</variation>
    <location>
        <position position="169"/>
    </location>
</feature>
<feature type="sequence variant" id="VAR_075301" description="No effect on enzymatic activity; dbSNP:rs1355291180." evidence="16">
    <original>A</original>
    <variation>T</variation>
    <location>
        <position position="196"/>
    </location>
</feature>
<feature type="sequence variant" id="VAR_075302" description="No effect on enzymatic activity; dbSNP:rs565109128." evidence="16">
    <original>A</original>
    <variation>V</variation>
    <location>
        <position position="196"/>
    </location>
</feature>
<feature type="sequence variant" id="VAR_058107" description="In CCDS2; loss of activity; dbSNP:rs2082607260." evidence="4 8 14">
    <original>L</original>
    <variation>P</variation>
    <location>
        <position position="197"/>
    </location>
</feature>
<feature type="sequence variant" id="VAR_071788" description="In CCDS2; retains no significant activity; dbSNP:rs767887772." evidence="14">
    <original>R</original>
    <variation>P</variation>
    <location>
        <position position="208"/>
    </location>
</feature>
<feature type="sequence variant" id="VAR_025723" description="In dbSNP:rs17851582." evidence="6">
    <original>T</original>
    <variation>M</variation>
    <location>
        <position position="209"/>
    </location>
</feature>
<feature type="sequence variant" id="VAR_075303" description="No effect on enzymatic activity; dbSNP:rs141471799." evidence="16">
    <original>A</original>
    <variation>T</variation>
    <location>
        <position position="224"/>
    </location>
</feature>
<feature type="helix" evidence="20">
    <location>
        <begin position="17"/>
        <end position="20"/>
    </location>
</feature>
<feature type="strand" evidence="20">
    <location>
        <begin position="25"/>
        <end position="27"/>
    </location>
</feature>
<feature type="strand" evidence="20">
    <location>
        <begin position="31"/>
        <end position="36"/>
    </location>
</feature>
<feature type="strand" evidence="20">
    <location>
        <begin position="39"/>
        <end position="43"/>
    </location>
</feature>
<feature type="helix" evidence="20">
    <location>
        <begin position="44"/>
        <end position="46"/>
    </location>
</feature>
<feature type="helix" evidence="20">
    <location>
        <begin position="47"/>
        <end position="57"/>
    </location>
</feature>
<feature type="turn" evidence="20">
    <location>
        <begin position="58"/>
        <end position="60"/>
    </location>
</feature>
<feature type="strand" evidence="20">
    <location>
        <begin position="62"/>
        <end position="67"/>
    </location>
</feature>
<feature type="helix" evidence="20">
    <location>
        <begin position="73"/>
        <end position="78"/>
    </location>
</feature>
<feature type="strand" evidence="20">
    <location>
        <begin position="83"/>
        <end position="90"/>
    </location>
</feature>
<feature type="helix" evidence="20">
    <location>
        <begin position="93"/>
        <end position="102"/>
    </location>
</feature>
<feature type="helix" evidence="20">
    <location>
        <begin position="103"/>
        <end position="105"/>
    </location>
</feature>
<feature type="strand" evidence="20">
    <location>
        <begin position="107"/>
        <end position="115"/>
    </location>
</feature>
<feature type="helix" evidence="20">
    <location>
        <begin position="117"/>
        <end position="120"/>
    </location>
</feature>
<feature type="helix" evidence="20">
    <location>
        <begin position="121"/>
        <end position="123"/>
    </location>
</feature>
<feature type="strand" evidence="20">
    <location>
        <begin position="129"/>
        <end position="134"/>
    </location>
</feature>
<feature type="helix" evidence="20">
    <location>
        <begin position="141"/>
        <end position="143"/>
    </location>
</feature>
<feature type="turn" evidence="20">
    <location>
        <begin position="144"/>
        <end position="146"/>
    </location>
</feature>
<feature type="helix" evidence="20">
    <location>
        <begin position="147"/>
        <end position="154"/>
    </location>
</feature>
<feature type="helix" evidence="20">
    <location>
        <begin position="156"/>
        <end position="159"/>
    </location>
</feature>
<feature type="strand" evidence="20">
    <location>
        <begin position="160"/>
        <end position="168"/>
    </location>
</feature>
<feature type="helix" evidence="20">
    <location>
        <begin position="171"/>
        <end position="177"/>
    </location>
</feature>
<feature type="turn" evidence="20">
    <location>
        <begin position="178"/>
        <end position="181"/>
    </location>
</feature>
<feature type="helix" evidence="20">
    <location>
        <begin position="185"/>
        <end position="192"/>
    </location>
</feature>
<feature type="helix" evidence="20">
    <location>
        <begin position="194"/>
        <end position="200"/>
    </location>
</feature>
<feature type="helix" evidence="20">
    <location>
        <begin position="204"/>
        <end position="206"/>
    </location>
</feature>
<feature type="strand" evidence="20">
    <location>
        <begin position="207"/>
        <end position="213"/>
    </location>
</feature>
<feature type="strand" evidence="20">
    <location>
        <begin position="226"/>
        <end position="234"/>
    </location>
</feature>
<reference key="1">
    <citation type="journal article" date="1995" name="Biochim. Biophys. Acta">
        <title>Cloning and sequence analysis of human guanidinoacetate N-methyltransferase cDNA.</title>
        <authorList>
            <person name="Isbrandt D."/>
            <person name="von Figura K."/>
        </authorList>
    </citation>
    <scope>NUCLEOTIDE SEQUENCE [MRNA] (ISOFORM 1)</scope>
    <source>
        <tissue>Liver</tissue>
    </source>
</reference>
<reference key="2">
    <citation type="journal article" date="1997" name="Biochem. Biophys. Res. Commun.">
        <title>The human guanidinoacetate methyltransferase (GAMT) gene maps to a syntenic region on 19p13.3, homologous to band C of mouse chromosome 10, but GAMT is not mutated in jittery mice.</title>
        <authorList>
            <person name="Jenne D.E."/>
            <person name="Olsen A.S."/>
            <person name="Zimmer M."/>
        </authorList>
    </citation>
    <scope>NUCLEOTIDE SEQUENCE [GENOMIC DNA]</scope>
</reference>
<reference key="3">
    <citation type="submission" date="1999-09" db="EMBL/GenBank/DDBJ databases">
        <title>Gene structure of human guanidinoacetate N-methyltransferase.</title>
        <authorList>
            <person name="Isbrandt D."/>
            <person name="Schmidt A."/>
        </authorList>
    </citation>
    <scope>NUCLEOTIDE SEQUENCE [GENOMIC DNA]</scope>
</reference>
<reference key="4">
    <citation type="submission" date="2003-05" db="EMBL/GenBank/DDBJ databases">
        <title>Cloning of human full-length CDSs in BD Creator(TM) system donor vector.</title>
        <authorList>
            <person name="Kalnine N."/>
            <person name="Chen X."/>
            <person name="Rolfs A."/>
            <person name="Halleck A."/>
            <person name="Hines L."/>
            <person name="Eisenstein S."/>
            <person name="Koundinya M."/>
            <person name="Raphael J."/>
            <person name="Moreira D."/>
            <person name="Kelley T."/>
            <person name="LaBaer J."/>
            <person name="Lin Y."/>
            <person name="Phelan M."/>
            <person name="Farmer A."/>
        </authorList>
    </citation>
    <scope>NUCLEOTIDE SEQUENCE [LARGE SCALE MRNA] (ISOFORM 1)</scope>
</reference>
<reference key="5">
    <citation type="journal article" date="2004" name="Nat. Genet.">
        <title>Complete sequencing and characterization of 21,243 full-length human cDNAs.</title>
        <authorList>
            <person name="Ota T."/>
            <person name="Suzuki Y."/>
            <person name="Nishikawa T."/>
            <person name="Otsuki T."/>
            <person name="Sugiyama T."/>
            <person name="Irie R."/>
            <person name="Wakamatsu A."/>
            <person name="Hayashi K."/>
            <person name="Sato H."/>
            <person name="Nagai K."/>
            <person name="Kimura K."/>
            <person name="Makita H."/>
            <person name="Sekine M."/>
            <person name="Obayashi M."/>
            <person name="Nishi T."/>
            <person name="Shibahara T."/>
            <person name="Tanaka T."/>
            <person name="Ishii S."/>
            <person name="Yamamoto J."/>
            <person name="Saito K."/>
            <person name="Kawai Y."/>
            <person name="Isono Y."/>
            <person name="Nakamura Y."/>
            <person name="Nagahari K."/>
            <person name="Murakami K."/>
            <person name="Yasuda T."/>
            <person name="Iwayanagi T."/>
            <person name="Wagatsuma M."/>
            <person name="Shiratori A."/>
            <person name="Sudo H."/>
            <person name="Hosoiri T."/>
            <person name="Kaku Y."/>
            <person name="Kodaira H."/>
            <person name="Kondo H."/>
            <person name="Sugawara M."/>
            <person name="Takahashi M."/>
            <person name="Kanda K."/>
            <person name="Yokoi T."/>
            <person name="Furuya T."/>
            <person name="Kikkawa E."/>
            <person name="Omura Y."/>
            <person name="Abe K."/>
            <person name="Kamihara K."/>
            <person name="Katsuta N."/>
            <person name="Sato K."/>
            <person name="Tanikawa M."/>
            <person name="Yamazaki M."/>
            <person name="Ninomiya K."/>
            <person name="Ishibashi T."/>
            <person name="Yamashita H."/>
            <person name="Murakawa K."/>
            <person name="Fujimori K."/>
            <person name="Tanai H."/>
            <person name="Kimata M."/>
            <person name="Watanabe M."/>
            <person name="Hiraoka S."/>
            <person name="Chiba Y."/>
            <person name="Ishida S."/>
            <person name="Ono Y."/>
            <person name="Takiguchi S."/>
            <person name="Watanabe S."/>
            <person name="Yosida M."/>
            <person name="Hotuta T."/>
            <person name="Kusano J."/>
            <person name="Kanehori K."/>
            <person name="Takahashi-Fujii A."/>
            <person name="Hara H."/>
            <person name="Tanase T.-O."/>
            <person name="Nomura Y."/>
            <person name="Togiya S."/>
            <person name="Komai F."/>
            <person name="Hara R."/>
            <person name="Takeuchi K."/>
            <person name="Arita M."/>
            <person name="Imose N."/>
            <person name="Musashino K."/>
            <person name="Yuuki H."/>
            <person name="Oshima A."/>
            <person name="Sasaki N."/>
            <person name="Aotsuka S."/>
            <person name="Yoshikawa Y."/>
            <person name="Matsunawa H."/>
            <person name="Ichihara T."/>
            <person name="Shiohata N."/>
            <person name="Sano S."/>
            <person name="Moriya S."/>
            <person name="Momiyama H."/>
            <person name="Satoh N."/>
            <person name="Takami S."/>
            <person name="Terashima Y."/>
            <person name="Suzuki O."/>
            <person name="Nakagawa S."/>
            <person name="Senoh A."/>
            <person name="Mizoguchi H."/>
            <person name="Goto Y."/>
            <person name="Shimizu F."/>
            <person name="Wakebe H."/>
            <person name="Hishigaki H."/>
            <person name="Watanabe T."/>
            <person name="Sugiyama A."/>
            <person name="Takemoto M."/>
            <person name="Kawakami B."/>
            <person name="Yamazaki M."/>
            <person name="Watanabe K."/>
            <person name="Kumagai A."/>
            <person name="Itakura S."/>
            <person name="Fukuzumi Y."/>
            <person name="Fujimori Y."/>
            <person name="Komiyama M."/>
            <person name="Tashiro H."/>
            <person name="Tanigami A."/>
            <person name="Fujiwara T."/>
            <person name="Ono T."/>
            <person name="Yamada K."/>
            <person name="Fujii Y."/>
            <person name="Ozaki K."/>
            <person name="Hirao M."/>
            <person name="Ohmori Y."/>
            <person name="Kawabata A."/>
            <person name="Hikiji T."/>
            <person name="Kobatake N."/>
            <person name="Inagaki H."/>
            <person name="Ikema Y."/>
            <person name="Okamoto S."/>
            <person name="Okitani R."/>
            <person name="Kawakami T."/>
            <person name="Noguchi S."/>
            <person name="Itoh T."/>
            <person name="Shigeta K."/>
            <person name="Senba T."/>
            <person name="Matsumura K."/>
            <person name="Nakajima Y."/>
            <person name="Mizuno T."/>
            <person name="Morinaga M."/>
            <person name="Sasaki M."/>
            <person name="Togashi T."/>
            <person name="Oyama M."/>
            <person name="Hata H."/>
            <person name="Watanabe M."/>
            <person name="Komatsu T."/>
            <person name="Mizushima-Sugano J."/>
            <person name="Satoh T."/>
            <person name="Shirai Y."/>
            <person name="Takahashi Y."/>
            <person name="Nakagawa K."/>
            <person name="Okumura K."/>
            <person name="Nagase T."/>
            <person name="Nomura N."/>
            <person name="Kikuchi H."/>
            <person name="Masuho Y."/>
            <person name="Yamashita R."/>
            <person name="Nakai K."/>
            <person name="Yada T."/>
            <person name="Nakamura Y."/>
            <person name="Ohara O."/>
            <person name="Isogai T."/>
            <person name="Sugano S."/>
        </authorList>
    </citation>
    <scope>NUCLEOTIDE SEQUENCE [LARGE SCALE MRNA] (ISOFORM 2)</scope>
    <source>
        <tissue>Cerebellum</tissue>
    </source>
</reference>
<reference key="6">
    <citation type="journal article" date="2004" name="Nature">
        <title>The DNA sequence and biology of human chromosome 19.</title>
        <authorList>
            <person name="Grimwood J."/>
            <person name="Gordon L.A."/>
            <person name="Olsen A.S."/>
            <person name="Terry A."/>
            <person name="Schmutz J."/>
            <person name="Lamerdin J.E."/>
            <person name="Hellsten U."/>
            <person name="Goodstein D."/>
            <person name="Couronne O."/>
            <person name="Tran-Gyamfi M."/>
            <person name="Aerts A."/>
            <person name="Altherr M."/>
            <person name="Ashworth L."/>
            <person name="Bajorek E."/>
            <person name="Black S."/>
            <person name="Branscomb E."/>
            <person name="Caenepeel S."/>
            <person name="Carrano A.V."/>
            <person name="Caoile C."/>
            <person name="Chan Y.M."/>
            <person name="Christensen M."/>
            <person name="Cleland C.A."/>
            <person name="Copeland A."/>
            <person name="Dalin E."/>
            <person name="Dehal P."/>
            <person name="Denys M."/>
            <person name="Detter J.C."/>
            <person name="Escobar J."/>
            <person name="Flowers D."/>
            <person name="Fotopulos D."/>
            <person name="Garcia C."/>
            <person name="Georgescu A.M."/>
            <person name="Glavina T."/>
            <person name="Gomez M."/>
            <person name="Gonzales E."/>
            <person name="Groza M."/>
            <person name="Hammon N."/>
            <person name="Hawkins T."/>
            <person name="Haydu L."/>
            <person name="Ho I."/>
            <person name="Huang W."/>
            <person name="Israni S."/>
            <person name="Jett J."/>
            <person name="Kadner K."/>
            <person name="Kimball H."/>
            <person name="Kobayashi A."/>
            <person name="Larionov V."/>
            <person name="Leem S.-H."/>
            <person name="Lopez F."/>
            <person name="Lou Y."/>
            <person name="Lowry S."/>
            <person name="Malfatti S."/>
            <person name="Martinez D."/>
            <person name="McCready P.M."/>
            <person name="Medina C."/>
            <person name="Morgan J."/>
            <person name="Nelson K."/>
            <person name="Nolan M."/>
            <person name="Ovcharenko I."/>
            <person name="Pitluck S."/>
            <person name="Pollard M."/>
            <person name="Popkie A.P."/>
            <person name="Predki P."/>
            <person name="Quan G."/>
            <person name="Ramirez L."/>
            <person name="Rash S."/>
            <person name="Retterer J."/>
            <person name="Rodriguez A."/>
            <person name="Rogers S."/>
            <person name="Salamov A."/>
            <person name="Salazar A."/>
            <person name="She X."/>
            <person name="Smith D."/>
            <person name="Slezak T."/>
            <person name="Solovyev V."/>
            <person name="Thayer N."/>
            <person name="Tice H."/>
            <person name="Tsai M."/>
            <person name="Ustaszewska A."/>
            <person name="Vo N."/>
            <person name="Wagner M."/>
            <person name="Wheeler J."/>
            <person name="Wu K."/>
            <person name="Xie G."/>
            <person name="Yang J."/>
            <person name="Dubchak I."/>
            <person name="Furey T.S."/>
            <person name="DeJong P."/>
            <person name="Dickson M."/>
            <person name="Gordon D."/>
            <person name="Eichler E.E."/>
            <person name="Pennacchio L.A."/>
            <person name="Richardson P."/>
            <person name="Stubbs L."/>
            <person name="Rokhsar D.S."/>
            <person name="Myers R.M."/>
            <person name="Rubin E.M."/>
            <person name="Lucas S.M."/>
        </authorList>
    </citation>
    <scope>NUCLEOTIDE SEQUENCE [LARGE SCALE GENOMIC DNA]</scope>
</reference>
<reference key="7">
    <citation type="submission" date="2005-09" db="EMBL/GenBank/DDBJ databases">
        <authorList>
            <person name="Mural R.J."/>
            <person name="Istrail S."/>
            <person name="Sutton G."/>
            <person name="Florea L."/>
            <person name="Halpern A.L."/>
            <person name="Mobarry C.M."/>
            <person name="Lippert R."/>
            <person name="Walenz B."/>
            <person name="Shatkay H."/>
            <person name="Dew I."/>
            <person name="Miller J.R."/>
            <person name="Flanigan M.J."/>
            <person name="Edwards N.J."/>
            <person name="Bolanos R."/>
            <person name="Fasulo D."/>
            <person name="Halldorsson B.V."/>
            <person name="Hannenhalli S."/>
            <person name="Turner R."/>
            <person name="Yooseph S."/>
            <person name="Lu F."/>
            <person name="Nusskern D.R."/>
            <person name="Shue B.C."/>
            <person name="Zheng X.H."/>
            <person name="Zhong F."/>
            <person name="Delcher A.L."/>
            <person name="Huson D.H."/>
            <person name="Kravitz S.A."/>
            <person name="Mouchard L."/>
            <person name="Reinert K."/>
            <person name="Remington K.A."/>
            <person name="Clark A.G."/>
            <person name="Waterman M.S."/>
            <person name="Eichler E.E."/>
            <person name="Adams M.D."/>
            <person name="Hunkapiller M.W."/>
            <person name="Myers E.W."/>
            <person name="Venter J.C."/>
        </authorList>
    </citation>
    <scope>NUCLEOTIDE SEQUENCE [LARGE SCALE GENOMIC DNA]</scope>
</reference>
<reference key="8">
    <citation type="journal article" date="2004" name="Genome Res.">
        <title>The status, quality, and expansion of the NIH full-length cDNA project: the Mammalian Gene Collection (MGC).</title>
        <authorList>
            <consortium name="The MGC Project Team"/>
        </authorList>
    </citation>
    <scope>NUCLEOTIDE SEQUENCE [LARGE SCALE MRNA] (ISOFORM 1)</scope>
    <scope>VARIANT MET-209</scope>
    <source>
        <tissue>Lymph</tissue>
        <tissue>Skeletal muscle</tissue>
    </source>
</reference>
<reference key="9">
    <citation type="journal article" date="1996" name="Am. J. Hum. Genet.">
        <title>Guanidinoacetate methyltransferase deficiency: the first inborn error of creatine metabolism in man.</title>
        <authorList>
            <person name="Stoeckler S."/>
            <person name="Isbrandt D."/>
            <person name="Hanefeld F."/>
            <person name="Schmidt B."/>
            <person name="von Figura K."/>
        </authorList>
    </citation>
    <scope>TISSUE SPECIFICITY</scope>
    <scope>INVOLVEMENT IN CCDS2</scope>
</reference>
<reference key="10">
    <citation type="journal article" date="2011" name="BMC Syst. Biol.">
        <title>Initial characterization of the human central proteome.</title>
        <authorList>
            <person name="Burkard T.R."/>
            <person name="Planyavsky M."/>
            <person name="Kaupe I."/>
            <person name="Breitwieser F.P."/>
            <person name="Buerckstuemmer T."/>
            <person name="Bennett K.L."/>
            <person name="Superti-Furga G."/>
            <person name="Colinge J."/>
        </authorList>
    </citation>
    <scope>IDENTIFICATION BY MASS SPECTROMETRY [LARGE SCALE ANALYSIS]</scope>
</reference>
<reference key="11">
    <citation type="journal article" date="2012" name="Mol. Cell. Proteomics">
        <title>Comparative large-scale characterisation of plant vs. mammal proteins reveals similar and idiosyncratic N-alpha acetylation features.</title>
        <authorList>
            <person name="Bienvenut W.V."/>
            <person name="Sumpton D."/>
            <person name="Martinez A."/>
            <person name="Lilla S."/>
            <person name="Espagne C."/>
            <person name="Meinnel T."/>
            <person name="Giglione C."/>
        </authorList>
    </citation>
    <scope>ACETYLATION [LARGE SCALE ANALYSIS] AT SER-2</scope>
    <scope>CLEAVAGE OF INITIATOR METHIONINE [LARGE SCALE ANALYSIS]</scope>
    <scope>IDENTIFICATION BY MASS SPECTROMETRY [LARGE SCALE ANALYSIS]</scope>
</reference>
<reference key="12">
    <citation type="submission" date="2006-03" db="PDB data bank">
        <title>The crystal structure of human guanidinoacetate N-methyltransferase with SAH.</title>
        <authorList>
            <consortium name="Structural genomics consortium (SGC)"/>
        </authorList>
    </citation>
    <scope>X-RAY CRYSTALLOGRAPHY (1.86 ANGSTROMS) IN COMPLEX WITH S-ADENOSYL-L-HOMOCYSTEINE</scope>
</reference>
<reference key="13">
    <citation type="journal article" date="2002" name="Mol. Genet. Metab.">
        <title>Creatine depletion in a new case with AGAT deficiency: clinical and genetic study in a large pedigree.</title>
        <authorList>
            <person name="Battini R."/>
            <person name="Leuzzi V."/>
            <person name="Carducci C."/>
            <person name="Tosetti M."/>
            <person name="Bianchi M.C."/>
            <person name="Item C.B."/>
            <person name="Stoeckler-Ipsiroglu S."/>
            <person name="Cioni G."/>
        </authorList>
    </citation>
    <scope>VARIANT CCDS2 PRO-197</scope>
</reference>
<reference key="14">
    <citation type="journal article" date="2004" name="Hum. Mutat.">
        <title>Characterization of seven novel mutations in seven patients with GAMT deficiency.</title>
        <authorList>
            <person name="Item C.B."/>
            <person name="Mercimek-Mahmutoglu S."/>
            <person name="Battini R."/>
            <person name="Edlinger-Horvat C."/>
            <person name="Stromberger C."/>
            <person name="Bodamer O."/>
            <person name="Muehl A."/>
            <person name="Vilaseca M.A."/>
            <person name="Korall H."/>
            <person name="Stoeckler-Ipsiroglu S."/>
        </authorList>
    </citation>
    <scope>VARIANTS CCDS2 SER-20; PRO-51 AND PRO-54</scope>
</reference>
<reference key="15">
    <citation type="journal article" date="2005" name="Am. J. Med. Genet. A">
        <title>Guanidinoacetate methyltransferase deficiency identified in adults and a child with mental retardation.</title>
        <authorList>
            <person name="Caldeira Araujo H."/>
            <person name="Smit W."/>
            <person name="Verhoeven N.M."/>
            <person name="Salomons G.S."/>
            <person name="Silva S."/>
            <person name="Vasconcelos R."/>
            <person name="Tomas H."/>
            <person name="Tavares de Almeida I."/>
            <person name="Jakobs C."/>
            <person name="Duran M."/>
        </authorList>
    </citation>
    <scope>VARIANTS CCDS2 SER-20 AND TYR-169</scope>
</reference>
<reference key="16">
    <citation type="journal article" date="2006" name="Mol. Genet. Metab.">
        <title>A mutation on exon 6 of guanidinoacetate methyltransferase (GAMT) gene supports a different function for isoform a and b of GAMT enzyme.</title>
        <authorList>
            <person name="Leuzzi V."/>
            <person name="Carducci C."/>
            <person name="Carducci C."/>
            <person name="Matricardi M."/>
            <person name="Bianchi M.C."/>
            <person name="Di Sabato M.L."/>
            <person name="Artiola C."/>
            <person name="Antonozzi I."/>
        </authorList>
    </citation>
    <scope>VARIANT CCDS2 PRO-197</scope>
</reference>
<reference key="17">
    <citation type="journal article" date="2006" name="Neurology">
        <title>GAMT deficiency: features, treatment, and outcome in an inborn error of creatine synthesis.</title>
        <authorList>
            <person name="Mercimek-Mahmutoglu S."/>
            <person name="Stoeckler-Ipsiroglu S."/>
            <person name="Adami A."/>
            <person name="Appleton R."/>
            <person name="Araujo H.C."/>
            <person name="Duran M."/>
            <person name="Ensenauer R."/>
            <person name="Fernandez-Alvarez E."/>
            <person name="Garcia P."/>
            <person name="Grolik C."/>
            <person name="Item C.B."/>
            <person name="Leuzzi V."/>
            <person name="Marquardt I."/>
            <person name="Muehl A."/>
            <person name="Saelke-Kellermann R.A."/>
            <person name="Salomons G.S."/>
            <person name="Schulze A."/>
            <person name="Surtees R."/>
            <person name="van der Knaap M.S."/>
            <person name="Vasconcelos R."/>
            <person name="Verhoeven N.M."/>
            <person name="Vilarinho L."/>
            <person name="Wilichowski E."/>
            <person name="Jakobs C."/>
        </authorList>
    </citation>
    <scope>VARIANT CCDS2 PRO-51</scope>
</reference>
<reference key="18">
    <citation type="journal article" date="2006" name="Neurology">
        <title>High frequency of creatine deficiency syndromes in patients with unexplained mental retardation.</title>
        <authorList>
            <person name="Lion-Francois L."/>
            <person name="Cheillan D."/>
            <person name="Pitelet G."/>
            <person name="Acquaviva-Bourdain C."/>
            <person name="Bussy G."/>
            <person name="Cotton F."/>
            <person name="Guibaud L."/>
            <person name="Gerard D."/>
            <person name="Rivier C."/>
            <person name="Vianey-Saban C."/>
            <person name="Jakobs C."/>
            <person name="Salomons G.S."/>
            <person name="des Portes V."/>
        </authorList>
    </citation>
    <scope>VARIANT CCDS2 LEU-50</scope>
</reference>
<reference key="19">
    <citation type="journal article" date="2007" name="Mol. Genet. Metab.">
        <title>Successful treatment of a guanidinoacetate methyltransferase deficient patient: findings with relevance to treatment strategy and pathophysiology.</title>
        <authorList>
            <person name="Verbruggen K.T."/>
            <person name="Sijens P.E."/>
            <person name="Schulze A."/>
            <person name="Lunsing R.J."/>
            <person name="Jakobs C."/>
            <person name="Salomons G.S."/>
            <person name="van Spronsen F.J."/>
        </authorList>
    </citation>
    <scope>VARIANT CCDS2 PRO-166</scope>
</reference>
<reference key="20">
    <citation type="journal article" date="2009" name="Dev. Med. Child. Neurol.">
        <title>Guanidinoacetate methyltransferase (GAMT) deficiency: late onset of movement disorder and preserved expressive language.</title>
        <authorList>
            <person name="O'Rourke D.J."/>
            <person name="Ryan S."/>
            <person name="Salomons G."/>
            <person name="Jakobs C."/>
            <person name="Monavari A."/>
            <person name="King M.D."/>
        </authorList>
    </citation>
    <scope>VARIANT CCDS2 ASN-135</scope>
</reference>
<reference key="21">
    <citation type="journal article" date="2013" name="Mol. Genet. Metab.">
        <title>Biochemical, molecular, and clinical diagnoses of patients with cerebral creatine deficiency syndromes.</title>
        <authorList>
            <person name="Comeaux M.S."/>
            <person name="Wang J."/>
            <person name="Wang G."/>
            <person name="Kleppe S."/>
            <person name="Zhang V.W."/>
            <person name="Schmitt E.S."/>
            <person name="Craigen W.J."/>
            <person name="Renaud D."/>
            <person name="Sun Q."/>
            <person name="Wong L.J."/>
        </authorList>
    </citation>
    <scope>VARIANTS CCDS2 ARG-45; GLU-78; ASP-164 AND ARG-169</scope>
</reference>
<reference key="22">
    <citation type="journal article" date="2014" name="Hum. Mutat.">
        <title>Thirteen new patients with guanidinoacetate methyltransferase deficiency and functional characterization of nineteen novel missense variants in the GAMT gene.</title>
        <authorList>
            <person name="Mercimek-Mahmutoglu S."/>
            <person name="Ndika J."/>
            <person name="Kanhai W."/>
            <person name="de Villemeur T.B."/>
            <person name="Cheillan D."/>
            <person name="Christensen E."/>
            <person name="Dorison N."/>
            <person name="Hannig V."/>
            <person name="Hendriks Y."/>
            <person name="Hofstede F.C."/>
            <person name="Lion-Francois L."/>
            <person name="Lund A.M."/>
            <person name="Mundy H."/>
            <person name="Pitelet G."/>
            <person name="Raspall-Chaure M."/>
            <person name="Scott-Schwoerer J.A."/>
            <person name="Szakszon K."/>
            <person name="Valayannopoulos V."/>
            <person name="Williams M."/>
            <person name="Salomons G.S."/>
        </authorList>
    </citation>
    <scope>VARIANTS CCDS2 THR-8; CYS-68; VAL-75; PHE-110; TYR-147; PRO-159 AND PRO-208</scope>
    <scope>VARIANT HIS-27</scope>
    <scope>CHARACTERIZATION OF VARIANTS CCDS2 THR-8; ARG-45; LEU-50; PRO-51; PRO-54; CYS-68; VAL-75; PHE-110; TYR-147; PRO-159; PRO-166; TYR-169; PRO-197 AND PRO-208</scope>
    <scope>CHARACTERIZATION OF VARIANT HIS-27</scope>
    <scope>FUNCTION</scope>
</reference>
<reference key="23">
    <citation type="journal article" date="2015" name="Mol. Genet. Genomics">
        <title>Carrier frequency of guanidinoacetate methyltransferase deficiency in the general population by functional characterization of missense variants in the GAMT gene.</title>
        <authorList>
            <person name="Desroches C.L."/>
            <person name="Patel J."/>
            <person name="Wang P."/>
            <person name="Minassian B."/>
            <person name="Marshall C.R."/>
            <person name="Salomons G.S."/>
            <person name="Mercimek-Mahmutoglu S."/>
        </authorList>
    </citation>
    <scope>VARIANTS VAL-71; MET-78; ILE-95; GLN-105; ARG-146; ASP-156; LEU-157 AND ILE-167</scope>
    <scope>VARIANT CCDS2 PRO-106</scope>
    <scope>CHARACTERIZATION OF VARIANTS VAL-71; MET-78; ILE-95; GLN-105; PRO-106; ARG-146; ASP-156; LEU-157 AND ILE-167</scope>
    <scope>FUNCTION</scope>
</reference>
<reference key="24">
    <citation type="journal article" date="2016" name="Gene">
        <title>A pilot study to estimate incidence of guanidinoacetate methyltransferase deficiency in newborns by direct sequencing of the GAMT gene.</title>
        <authorList>
            <person name="Mercimek-Mahmutoglu S."/>
            <person name="Pop A."/>
            <person name="Kanhai W."/>
            <person name="Fernandez Ojeda M."/>
            <person name="Holwerda U."/>
            <person name="Smith D."/>
            <person name="Loeber J.G."/>
            <person name="Schielen P.C."/>
            <person name="Salomons G.S."/>
        </authorList>
    </citation>
    <scope>VARIANTS LEU-44; LEU-76; THR-196; VAL-196 AND THR-224</scope>
    <scope>CHARACTERIZATION OF VARIANTS LEU-44; LEU-76; THR-196; VAL-196 AND THR-224</scope>
    <scope>FUNCTION</scope>
</reference>